<organism>
    <name type="scientific">Nicotiana tabacum</name>
    <name type="common">Common tobacco</name>
    <dbReference type="NCBI Taxonomy" id="4097"/>
    <lineage>
        <taxon>Eukaryota</taxon>
        <taxon>Viridiplantae</taxon>
        <taxon>Streptophyta</taxon>
        <taxon>Embryophyta</taxon>
        <taxon>Tracheophyta</taxon>
        <taxon>Spermatophyta</taxon>
        <taxon>Magnoliopsida</taxon>
        <taxon>eudicotyledons</taxon>
        <taxon>Gunneridae</taxon>
        <taxon>Pentapetalae</taxon>
        <taxon>asterids</taxon>
        <taxon>lamiids</taxon>
        <taxon>Solanales</taxon>
        <taxon>Solanaceae</taxon>
        <taxon>Nicotianoideae</taxon>
        <taxon>Nicotianeae</taxon>
        <taxon>Nicotiana</taxon>
    </lineage>
</organism>
<protein>
    <recommendedName>
        <fullName evidence="1">NAD(P)H-quinone oxidoreductase subunit K, chloroplastic</fullName>
        <ecNumber evidence="1">7.1.1.-</ecNumber>
    </recommendedName>
    <alternativeName>
        <fullName evidence="1">NAD(P)H dehydrogenase subunit K</fullName>
    </alternativeName>
    <alternativeName>
        <fullName evidence="1">NADH-plastoquinone oxidoreductase subunit K</fullName>
    </alternativeName>
</protein>
<geneLocation type="chloroplast"/>
<sequence length="225" mass="25472">MNSIQFPLLDRTTQNSVISTTLNDLSNWSRLSSLWPLLYGTSCCFIEFASLIGSRFDFDRYGLVPRSSPRQADLILTAGTVTMKMAPSLVRLYEQMPEPKYVIAMGACTITGGMFSTDSYSTVRGVDKLIPVDVYLPGCPPKPEAVIDAITKLRKKISRELYEDRIRSQRANRCFTTNHKFHVQHSIHTGNYDQRVLYQPPSTSEIPTEIFFKYKNSVSSPELVN</sequence>
<gene>
    <name evidence="1" type="primary">ndhK</name>
    <name type="synonym">psbG</name>
</gene>
<proteinExistence type="inferred from homology"/>
<dbReference type="EC" id="7.1.1.-" evidence="1"/>
<dbReference type="EMBL" id="Z00044">
    <property type="protein sequence ID" value="CAA77357.1"/>
    <property type="status" value="ALT_INIT"/>
    <property type="molecule type" value="Genomic_DNA"/>
</dbReference>
<dbReference type="PIR" id="A03468">
    <property type="entry name" value="F2NTG"/>
</dbReference>
<dbReference type="RefSeq" id="NP_054503.2">
    <property type="nucleotide sequence ID" value="NC_001879.2"/>
</dbReference>
<dbReference type="SMR" id="P06409"/>
<dbReference type="GeneID" id="800442"/>
<dbReference type="KEGG" id="nta:800442"/>
<dbReference type="OrthoDB" id="1871715at2759"/>
<dbReference type="Proteomes" id="UP000084051">
    <property type="component" value="Unplaced"/>
</dbReference>
<dbReference type="GO" id="GO:0009535">
    <property type="term" value="C:chloroplast thylakoid membrane"/>
    <property type="evidence" value="ECO:0007669"/>
    <property type="project" value="UniProtKB-SubCell"/>
</dbReference>
<dbReference type="GO" id="GO:0051539">
    <property type="term" value="F:4 iron, 4 sulfur cluster binding"/>
    <property type="evidence" value="ECO:0007669"/>
    <property type="project" value="UniProtKB-KW"/>
</dbReference>
<dbReference type="GO" id="GO:0005506">
    <property type="term" value="F:iron ion binding"/>
    <property type="evidence" value="ECO:0007669"/>
    <property type="project" value="UniProtKB-UniRule"/>
</dbReference>
<dbReference type="GO" id="GO:0008137">
    <property type="term" value="F:NADH dehydrogenase (ubiquinone) activity"/>
    <property type="evidence" value="ECO:0007669"/>
    <property type="project" value="InterPro"/>
</dbReference>
<dbReference type="GO" id="GO:0048038">
    <property type="term" value="F:quinone binding"/>
    <property type="evidence" value="ECO:0007669"/>
    <property type="project" value="UniProtKB-KW"/>
</dbReference>
<dbReference type="GO" id="GO:0019684">
    <property type="term" value="P:photosynthesis, light reaction"/>
    <property type="evidence" value="ECO:0007669"/>
    <property type="project" value="UniProtKB-UniRule"/>
</dbReference>
<dbReference type="FunFam" id="3.40.50.12280:FF:000003">
    <property type="entry name" value="NAD(P)H-quinone oxidoreductase subunit K, chloroplastic"/>
    <property type="match status" value="1"/>
</dbReference>
<dbReference type="Gene3D" id="3.40.50.12280">
    <property type="match status" value="1"/>
</dbReference>
<dbReference type="HAMAP" id="MF_01356">
    <property type="entry name" value="NDH1_NuoB"/>
    <property type="match status" value="1"/>
</dbReference>
<dbReference type="InterPro" id="IPR006137">
    <property type="entry name" value="NADH_UbQ_OxRdtase-like_20kDa"/>
</dbReference>
<dbReference type="InterPro" id="IPR006138">
    <property type="entry name" value="NADH_UQ_OxRdtase_20Kd_su"/>
</dbReference>
<dbReference type="NCBIfam" id="TIGR01957">
    <property type="entry name" value="nuoB_fam"/>
    <property type="match status" value="1"/>
</dbReference>
<dbReference type="NCBIfam" id="NF005012">
    <property type="entry name" value="PRK06411.1"/>
    <property type="match status" value="1"/>
</dbReference>
<dbReference type="PANTHER" id="PTHR11995">
    <property type="entry name" value="NADH DEHYDROGENASE"/>
    <property type="match status" value="1"/>
</dbReference>
<dbReference type="PANTHER" id="PTHR11995:SF14">
    <property type="entry name" value="NADH DEHYDROGENASE [UBIQUINONE] IRON-SULFUR PROTEIN 7, MITOCHONDRIAL"/>
    <property type="match status" value="1"/>
</dbReference>
<dbReference type="Pfam" id="PF01058">
    <property type="entry name" value="Oxidored_q6"/>
    <property type="match status" value="1"/>
</dbReference>
<dbReference type="SUPFAM" id="SSF56770">
    <property type="entry name" value="HydA/Nqo6-like"/>
    <property type="match status" value="1"/>
</dbReference>
<dbReference type="PROSITE" id="PS01150">
    <property type="entry name" value="COMPLEX1_20K"/>
    <property type="match status" value="1"/>
</dbReference>
<evidence type="ECO:0000255" key="1">
    <source>
        <dbReference type="HAMAP-Rule" id="MF_01356"/>
    </source>
</evidence>
<evidence type="ECO:0000305" key="2"/>
<reference key="1">
    <citation type="journal article" date="1986" name="EMBO J.">
        <title>The complete nucleotide sequence of the tobacco chloroplast genome: its gene organization and expression.</title>
        <authorList>
            <person name="Shinozaki K."/>
            <person name="Ohme M."/>
            <person name="Tanaka M."/>
            <person name="Wakasugi T."/>
            <person name="Hayashida N."/>
            <person name="Matsubayashi T."/>
            <person name="Zaita N."/>
            <person name="Chunwongse J."/>
            <person name="Obokata J."/>
            <person name="Yamaguchi-Shinozaki K."/>
            <person name="Ohto C."/>
            <person name="Torazawa K."/>
            <person name="Meng B.-Y."/>
            <person name="Sugita M."/>
            <person name="Deno H."/>
            <person name="Kamogashira T."/>
            <person name="Yamada K."/>
            <person name="Kusuda J."/>
            <person name="Takaiwa F."/>
            <person name="Kato A."/>
            <person name="Tohdoh N."/>
            <person name="Shimada H."/>
            <person name="Sugiura M."/>
        </authorList>
    </citation>
    <scope>NUCLEOTIDE SEQUENCE [LARGE SCALE GENOMIC DNA]</scope>
    <source>
        <strain>cv. Bright Yellow 4</strain>
    </source>
</reference>
<comment type="function">
    <text evidence="1">NDH shuttles electrons from NAD(P)H:plastoquinone, via FMN and iron-sulfur (Fe-S) centers, to quinones in the photosynthetic chain and possibly in a chloroplast respiratory chain. The immediate electron acceptor for the enzyme in this species is believed to be plastoquinone. Couples the redox reaction to proton translocation, and thus conserves the redox energy in a proton gradient.</text>
</comment>
<comment type="catalytic activity">
    <reaction evidence="1">
        <text>a plastoquinone + NADH + (n+1) H(+)(in) = a plastoquinol + NAD(+) + n H(+)(out)</text>
        <dbReference type="Rhea" id="RHEA:42608"/>
        <dbReference type="Rhea" id="RHEA-COMP:9561"/>
        <dbReference type="Rhea" id="RHEA-COMP:9562"/>
        <dbReference type="ChEBI" id="CHEBI:15378"/>
        <dbReference type="ChEBI" id="CHEBI:17757"/>
        <dbReference type="ChEBI" id="CHEBI:57540"/>
        <dbReference type="ChEBI" id="CHEBI:57945"/>
        <dbReference type="ChEBI" id="CHEBI:62192"/>
    </reaction>
</comment>
<comment type="catalytic activity">
    <reaction evidence="1">
        <text>a plastoquinone + NADPH + (n+1) H(+)(in) = a plastoquinol + NADP(+) + n H(+)(out)</text>
        <dbReference type="Rhea" id="RHEA:42612"/>
        <dbReference type="Rhea" id="RHEA-COMP:9561"/>
        <dbReference type="Rhea" id="RHEA-COMP:9562"/>
        <dbReference type="ChEBI" id="CHEBI:15378"/>
        <dbReference type="ChEBI" id="CHEBI:17757"/>
        <dbReference type="ChEBI" id="CHEBI:57783"/>
        <dbReference type="ChEBI" id="CHEBI:58349"/>
        <dbReference type="ChEBI" id="CHEBI:62192"/>
    </reaction>
</comment>
<comment type="cofactor">
    <cofactor evidence="1">
        <name>[4Fe-4S] cluster</name>
        <dbReference type="ChEBI" id="CHEBI:49883"/>
    </cofactor>
    <text evidence="1">Binds 1 [4Fe-4S] cluster.</text>
</comment>
<comment type="subunit">
    <text evidence="1">NDH is composed of at least 16 different subunits, 5 of which are encoded in the nucleus.</text>
</comment>
<comment type="subcellular location">
    <subcellularLocation>
        <location evidence="1">Plastid</location>
        <location evidence="1">Chloroplast thylakoid membrane</location>
        <topology evidence="1">Peripheral membrane protein</topology>
        <orientation evidence="1">Stromal side</orientation>
    </subcellularLocation>
</comment>
<comment type="similarity">
    <text evidence="1">Belongs to the complex I 20 kDa subunit family.</text>
</comment>
<comment type="sequence caution" evidence="2">
    <conflict type="erroneous initiation">
        <sequence resource="EMBL-CDS" id="CAA77357"/>
    </conflict>
</comment>
<name>NDHK_TOBAC</name>
<keyword id="KW-0004">4Fe-4S</keyword>
<keyword id="KW-0150">Chloroplast</keyword>
<keyword id="KW-0408">Iron</keyword>
<keyword id="KW-0411">Iron-sulfur</keyword>
<keyword id="KW-0472">Membrane</keyword>
<keyword id="KW-0479">Metal-binding</keyword>
<keyword id="KW-0520">NAD</keyword>
<keyword id="KW-0521">NADP</keyword>
<keyword id="KW-0934">Plastid</keyword>
<keyword id="KW-0618">Plastoquinone</keyword>
<keyword id="KW-0874">Quinone</keyword>
<keyword id="KW-1185">Reference proteome</keyword>
<keyword id="KW-0793">Thylakoid</keyword>
<keyword id="KW-1278">Translocase</keyword>
<keyword id="KW-0813">Transport</keyword>
<accession>P06409</accession>
<feature type="chain" id="PRO_0000118756" description="NAD(P)H-quinone oxidoreductase subunit K, chloroplastic">
    <location>
        <begin position="1"/>
        <end position="225"/>
    </location>
</feature>
<feature type="binding site" evidence="1">
    <location>
        <position position="43"/>
    </location>
    <ligand>
        <name>[4Fe-4S] cluster</name>
        <dbReference type="ChEBI" id="CHEBI:49883"/>
    </ligand>
</feature>
<feature type="binding site" evidence="1">
    <location>
        <position position="44"/>
    </location>
    <ligand>
        <name>[4Fe-4S] cluster</name>
        <dbReference type="ChEBI" id="CHEBI:49883"/>
    </ligand>
</feature>
<feature type="binding site" evidence="1">
    <location>
        <position position="108"/>
    </location>
    <ligand>
        <name>[4Fe-4S] cluster</name>
        <dbReference type="ChEBI" id="CHEBI:49883"/>
    </ligand>
</feature>
<feature type="binding site" evidence="1">
    <location>
        <position position="139"/>
    </location>
    <ligand>
        <name>[4Fe-4S] cluster</name>
        <dbReference type="ChEBI" id="CHEBI:49883"/>
    </ligand>
</feature>